<proteinExistence type="inferred from homology"/>
<reference key="1">
    <citation type="journal article" date="2006" name="Arch. Virol.">
        <title>Molecular characterization of human astroviruses isolated in Brazil, including the complete sequences of astrovirus genotypes 4 and 5.</title>
        <authorList>
            <person name="Silva P.A."/>
            <person name="Cardoso D.D."/>
            <person name="Schreier E."/>
        </authorList>
    </citation>
    <scope>NUCLEOTIDE SEQUENCE [GENOMIC RNA]</scope>
</reference>
<sequence>MASKPSKQVTVEVNNGRSRSRSRPRSQSRGRDKSVKITVNSRNKGRRQNGRNKHQSNQRVRNIVNKQLRKQGVTGPKPAICQRATATLGTVGSNTSGTTEIEACILLNPVLVKDATGSTQFGPVQALGAQYSMWKLKYLNVKLTSMVGSSAVNGTVVRVSLNPTSTPSSTSWSGLGARKHLDVTVGKNAVFKLKPADLGGPRDGWWLTNTNDNASDTLGPSIEIHTLGRTMSSYQNQQFTGGLFLVELASEWCFTGYAANPNLVNLMKSTDKQVNVTFNGSAGEPLVMSVPATSHFVRAVVARSTLPTSLARAGERTTSDTVWQVLNTAVSAAELVTPPPFNWLVKGGWWFVKLIAGRTRNGTRSFYVYPSYQDALSNKPAICTGGLPSGLRAASAVATTLQFTQMNQPSLGHGENTATLGRSIATAGDRLKVILTVGQPVTPNENNKQTWVGKTNTPTEEVVKIGVNTQNYNVMNGFTMISSIDWYDEEMQPLEVPVPMSELLVMKGINKKADVYAAQQYKNSISNNKHQITSVYLVRVKENFQVTNHLSYFFREKVDTTATELMKIRPQTYYTTVNFVQNNWYLLTSTVLHTGSLPSGWVWMNQELMNNENYIVDQGMKHLMTTPPVSSQLYFEMLTSLPQAMAEHFDQGDQAVVAHDSPGQALFSAEETDSDFESTEDETDEVDRFDLHLSSESDDDDVENNRVTLLSTLINQGMSVERATRITSNAFPTRAARLRRSVYNDLLVSGLGPDAAWSHACEQARKVGDNHDLQASGSRGHAE</sequence>
<feature type="chain" id="PRO_0000320235" description="Capsid polyprotein VP90">
    <location>
        <begin position="1"/>
        <end position="783"/>
    </location>
</feature>
<feature type="chain" id="PRO_0000419570" description="Capsid polyprotein VP70" evidence="4">
    <location>
        <begin position="1"/>
        <end position="653"/>
    </location>
</feature>
<feature type="chain" id="PRO_0000419571" description="Core protein VP34" evidence="4">
    <location>
        <begin position="1"/>
        <end position="312"/>
    </location>
</feature>
<feature type="chain" id="PRO_0000419572" description="Spike protein VP27" evidence="4">
    <location>
        <begin position="393"/>
        <end position="645"/>
    </location>
</feature>
<feature type="chain" id="PRO_0000419573" description="Spike protein VP25" evidence="4">
    <location>
        <begin position="423"/>
        <end position="645"/>
    </location>
</feature>
<feature type="region of interest" description="Basic" evidence="3">
    <location>
        <begin position="1"/>
        <end position="69"/>
    </location>
</feature>
<feature type="region of interest" description="Disordered" evidence="5">
    <location>
        <begin position="1"/>
        <end position="58"/>
    </location>
</feature>
<feature type="region of interest" description="Inner core" evidence="3">
    <location>
        <begin position="70"/>
        <end position="262"/>
    </location>
</feature>
<feature type="region of interest" description="Core attachment" evidence="3">
    <location>
        <begin position="393"/>
        <end position="422"/>
    </location>
</feature>
<feature type="region of interest" description="P2 globular domain" evidence="3">
    <location>
        <begin position="423"/>
        <end position="645"/>
    </location>
</feature>
<feature type="region of interest" description="Acidic" evidence="3">
    <location>
        <begin position="646"/>
        <end position="783"/>
    </location>
</feature>
<feature type="compositionally biased region" description="Polar residues" evidence="5">
    <location>
        <begin position="1"/>
        <end position="16"/>
    </location>
</feature>
<feature type="compositionally biased region" description="Basic residues" evidence="5">
    <location>
        <begin position="18"/>
        <end position="28"/>
    </location>
</feature>
<feature type="compositionally biased region" description="Basic residues" evidence="5">
    <location>
        <begin position="43"/>
        <end position="56"/>
    </location>
</feature>
<feature type="site" description="Cleavage" evidence="3">
    <location>
        <begin position="312"/>
        <end position="313"/>
    </location>
</feature>
<feature type="site" description="Cleavage" evidence="3">
    <location>
        <begin position="392"/>
        <end position="393"/>
    </location>
</feature>
<feature type="site" description="Cleavage" evidence="3">
    <location>
        <begin position="422"/>
        <end position="423"/>
    </location>
</feature>
<feature type="site" description="Cleavage" evidence="3">
    <location>
        <begin position="645"/>
        <end position="646"/>
    </location>
</feature>
<feature type="site" description="Cleavage" evidence="4">
    <location>
        <begin position="653"/>
        <end position="654"/>
    </location>
</feature>
<comment type="function">
    <molecule>Capsid polyprotein VP90</molecule>
    <text evidence="3">The capsid polyprotein VP90 self-assembles and undergoes a proteolytic cleavage by host caspases to yield the immature VP70 virion.</text>
</comment>
<comment type="function">
    <molecule>Capsid polyprotein VP70</molecule>
    <text evidence="3">The immature virion is composed of 180 VP70 subunits with 90 dimeric spikes and displays a T=3 icosahedral symmetry (By similarity). During maturation, VP70 undergoes a loss of 60 peripentonal spikes, which likely plays an important role in viral infectivity (By similarity).</text>
</comment>
<comment type="function">
    <molecule>Core protein VP34</molecule>
    <text evidence="1">Self-assembles to form an icosahedral capsid with a T=3 symmetry, about 43 nm in diameter (By similarity). This forms contains only 30 spikes located on the icosahedral 2-fold axes (By similarity).</text>
</comment>
<comment type="function">
    <molecule>Spike protein VP27</molecule>
    <text evidence="1 3">VP25 and VP27 Forms the spikes at the surface of the virion (By similarity). This forms contains only 30 spikes located on the icosahedral 2-fold axes (By similarity). Plays a role in the attachment to target host cell (By similarity). This attachment induces virion internalization through clathrin-dependent endocytosis (By similarity).</text>
</comment>
<comment type="function">
    <molecule>Spike protein VP25</molecule>
    <text evidence="1 2 3">VP25 and VP27 Forms the spikes at the surface of the virion (By similarity). This forms contains only 30 spikes located on the icosahedral 2-fold axes (By similarity). Plays a role in the attachment to target host cell (By similarity). This attachment induces virion internalization through clathrin-dependent endocytosis (By similarity).</text>
</comment>
<comment type="subunit">
    <molecule>Spike protein VP25</molecule>
    <text evidence="3">Heterodimer with spike protein VP27 (By similarity). The spikes form a globular dimer with 30 spikes covering the mature virion (By similarity). Spike protein VP25 that lacks the core attachment region may need to dimerize with spike protein VP27 to remain stably bound to the viral particle (By similarity).</text>
</comment>
<comment type="subunit">
    <molecule>Spike protein VP27</molecule>
    <text evidence="3">Heterodimer with spike protein VP25 (By similarity). The spikes form a globular dimer with 30 spikes covering the mature virion (By similarity). Spike protein VP25 that lacks the core attachment region may need to dimerize with spike protein VP27 to remain stably bound to the viral particle (By similarity).</text>
</comment>
<comment type="subcellular location">
    <molecule>Capsid polyprotein VP90</molecule>
    <subcellularLocation>
        <location evidence="3">Virion</location>
    </subcellularLocation>
    <text evidence="3">Immature capsid.</text>
</comment>
<comment type="subcellular location">
    <molecule>Capsid polyprotein VP70</molecule>
    <subcellularLocation>
        <location evidence="3">Virion</location>
    </subcellularLocation>
    <text evidence="3">Immature capsid after cleavage by host caspases.</text>
</comment>
<comment type="subcellular location">
    <molecule>Core protein VP34</molecule>
    <subcellularLocation>
        <location evidence="1">Virion</location>
    </subcellularLocation>
    <text evidence="1">Capsid.</text>
</comment>
<comment type="subcellular location">
    <molecule>Spike protein VP27</molecule>
    <subcellularLocation>
        <location evidence="1">Virion</location>
    </subcellularLocation>
    <text evidence="1">Capsid.</text>
</comment>
<comment type="subcellular location">
    <molecule>Spike protein VP25</molecule>
    <subcellularLocation>
        <location evidence="1">Host extracellular space</location>
    </subcellularLocation>
    <subcellularLocation>
        <location>Virion</location>
    </subcellularLocation>
    <text evidence="1 6">Capsid (By similarity). Spike protein VP25 that lacks the core attachment region may need to dimerize with spike protein VP27 to remain stably bound to the viral particle (Probable).</text>
</comment>
<comment type="domain">
    <molecule>Spike protein VP27</molecule>
    <text evidence="3">Contains the core attachment region and the P2 globular region.</text>
</comment>
<comment type="domain">
    <molecule>Spike protein VP25</molecule>
    <text evidence="3">Contains the P2 globular region (By similarity). The core attachment region is lost by cleavage (By similarity).</text>
</comment>
<comment type="PTM">
    <molecule>Capsid polyprotein VP90</molecule>
    <text evidence="3">Specific enzymatic cleavages by the host yield mature proteins. VP90 acidic C-terminal domain is eliminated from the immature virion by host caspases during viral maturation giving rise to virions composed of VP70 (By similarity). The virus can then dissociate from cellular membranes and exit the cell (By similarity). Further cleavages by host extracellular proteases occur resulting in the three structural proteins VP34, VP27 and VP25 and conferring infectivity (By similarity).</text>
</comment>
<comment type="similarity">
    <text evidence="6">Belongs to the astroviridae capsid polyprotein family.</text>
</comment>
<organismHost>
    <name type="scientific">Homo sapiens</name>
    <name type="common">Human</name>
    <dbReference type="NCBI Taxonomy" id="9606"/>
</organismHost>
<evidence type="ECO:0000250" key="1">
    <source>
        <dbReference type="UniProtKB" id="O12792"/>
    </source>
</evidence>
<evidence type="ECO:0000250" key="2">
    <source>
        <dbReference type="UniProtKB" id="Q82446"/>
    </source>
</evidence>
<evidence type="ECO:0000250" key="3">
    <source>
        <dbReference type="UniProtKB" id="Q9IFX1"/>
    </source>
</evidence>
<evidence type="ECO:0000255" key="4"/>
<evidence type="ECO:0000256" key="5">
    <source>
        <dbReference type="SAM" id="MobiDB-lite"/>
    </source>
</evidence>
<evidence type="ECO:0000305" key="6"/>
<protein>
    <recommendedName>
        <fullName>Capsid polyprotein VP90</fullName>
    </recommendedName>
    <component>
        <recommendedName>
            <fullName>Capsid polyprotein VP70</fullName>
        </recommendedName>
    </component>
    <component>
        <recommendedName>
            <fullName>Core protein VP34</fullName>
        </recommendedName>
    </component>
    <component>
        <recommendedName>
            <fullName>Spike protein VP27</fullName>
        </recommendedName>
    </component>
    <component>
        <recommendedName>
            <fullName>Spike protein VP25</fullName>
        </recommendedName>
    </component>
</protein>
<gene>
    <name type="ORF">ORF2</name>
</gene>
<keyword id="KW-0167">Capsid protein</keyword>
<keyword id="KW-1165">Clathrin-mediated endocytosis of virus by host</keyword>
<keyword id="KW-1142">T=3 icosahedral capsid protein</keyword>
<keyword id="KW-1162">Viral penetration into host cytoplasm</keyword>
<keyword id="KW-0946">Virion</keyword>
<keyword id="KW-1164">Virus endocytosis by host</keyword>
<keyword id="KW-1160">Virus entry into host cell</keyword>
<name>CAPSD_HASV5</name>
<accession>Q4TWH7</accession>
<organism>
    <name type="scientific">Human astrovirus-5</name>
    <name type="common">HAstV-5</name>
    <dbReference type="NCBI Taxonomy" id="35741"/>
    <lineage>
        <taxon>Viruses</taxon>
        <taxon>Riboviria</taxon>
        <taxon>Orthornavirae</taxon>
        <taxon>Pisuviricota</taxon>
        <taxon>Stelpaviricetes</taxon>
        <taxon>Stellavirales</taxon>
        <taxon>Astroviridae</taxon>
        <taxon>Mamastrovirus</taxon>
        <taxon>Mamastrovirus 1</taxon>
    </lineage>
</organism>
<dbReference type="EMBL" id="DQ028633">
    <property type="protein sequence ID" value="AAY46274.1"/>
    <property type="molecule type" value="Genomic_RNA"/>
</dbReference>
<dbReference type="SMR" id="Q4TWH7"/>
<dbReference type="Proteomes" id="UP000008628">
    <property type="component" value="Genome"/>
</dbReference>
<dbReference type="GO" id="GO:0043655">
    <property type="term" value="C:host extracellular space"/>
    <property type="evidence" value="ECO:0007669"/>
    <property type="project" value="UniProtKB-SubCell"/>
</dbReference>
<dbReference type="GO" id="GO:0039617">
    <property type="term" value="C:T=3 icosahedral viral capsid"/>
    <property type="evidence" value="ECO:0000250"/>
    <property type="project" value="UniProtKB"/>
</dbReference>
<dbReference type="GO" id="GO:0075512">
    <property type="term" value="P:clathrin-dependent endocytosis of virus by host cell"/>
    <property type="evidence" value="ECO:0000250"/>
    <property type="project" value="UniProtKB"/>
</dbReference>
<dbReference type="FunFam" id="2.60.120.20:FF:000007">
    <property type="entry name" value="Capsid polyprotein VP90"/>
    <property type="match status" value="1"/>
</dbReference>
<dbReference type="Gene3D" id="2.60.120.20">
    <property type="match status" value="1"/>
</dbReference>
<dbReference type="InterPro" id="IPR004337">
    <property type="entry name" value="Astro_capsid_N"/>
</dbReference>
<dbReference type="InterPro" id="IPR022027">
    <property type="entry name" value="Astro_capsid_p"/>
</dbReference>
<dbReference type="InterPro" id="IPR029053">
    <property type="entry name" value="Viral_coat"/>
</dbReference>
<dbReference type="Pfam" id="PF03115">
    <property type="entry name" value="Astro_capsid_N"/>
    <property type="match status" value="1"/>
</dbReference>
<dbReference type="Pfam" id="PF12226">
    <property type="entry name" value="Astro_capsid_p"/>
    <property type="match status" value="1"/>
</dbReference>